<proteinExistence type="inferred from homology"/>
<keyword id="KW-0963">Cytoplasm</keyword>
<keyword id="KW-0378">Hydrolase</keyword>
<keyword id="KW-0694">RNA-binding</keyword>
<keyword id="KW-0820">tRNA-binding</keyword>
<protein>
    <recommendedName>
        <fullName evidence="1">Peptidyl-tRNA hydrolase</fullName>
        <shortName evidence="1">Pth</shortName>
        <ecNumber evidence="1">3.1.1.29</ecNumber>
    </recommendedName>
</protein>
<comment type="function">
    <text evidence="1">Hydrolyzes ribosome-free peptidyl-tRNAs (with 1 or more amino acids incorporated), which drop off the ribosome during protein synthesis, or as a result of ribosome stalling.</text>
</comment>
<comment type="function">
    <text evidence="1">Catalyzes the release of premature peptidyl moieties from peptidyl-tRNA molecules trapped in stalled 50S ribosomal subunits, and thus maintains levels of free tRNAs and 50S ribosomes.</text>
</comment>
<comment type="catalytic activity">
    <reaction evidence="1">
        <text>an N-acyl-L-alpha-aminoacyl-tRNA + H2O = an N-acyl-L-amino acid + a tRNA + H(+)</text>
        <dbReference type="Rhea" id="RHEA:54448"/>
        <dbReference type="Rhea" id="RHEA-COMP:10123"/>
        <dbReference type="Rhea" id="RHEA-COMP:13883"/>
        <dbReference type="ChEBI" id="CHEBI:15377"/>
        <dbReference type="ChEBI" id="CHEBI:15378"/>
        <dbReference type="ChEBI" id="CHEBI:59874"/>
        <dbReference type="ChEBI" id="CHEBI:78442"/>
        <dbReference type="ChEBI" id="CHEBI:138191"/>
        <dbReference type="EC" id="3.1.1.29"/>
    </reaction>
</comment>
<comment type="subunit">
    <text evidence="1">Monomer.</text>
</comment>
<comment type="subcellular location">
    <subcellularLocation>
        <location evidence="1">Cytoplasm</location>
    </subcellularLocation>
</comment>
<comment type="similarity">
    <text evidence="1">Belongs to the PTH family.</text>
</comment>
<accession>C6E501</accession>
<dbReference type="EC" id="3.1.1.29" evidence="1"/>
<dbReference type="EMBL" id="CP001661">
    <property type="protein sequence ID" value="ACT17530.1"/>
    <property type="molecule type" value="Genomic_DNA"/>
</dbReference>
<dbReference type="SMR" id="C6E501"/>
<dbReference type="STRING" id="443144.GM21_1474"/>
<dbReference type="KEGG" id="gem:GM21_1474"/>
<dbReference type="eggNOG" id="COG0193">
    <property type="taxonomic scope" value="Bacteria"/>
</dbReference>
<dbReference type="HOGENOM" id="CLU_062456_1_0_7"/>
<dbReference type="OrthoDB" id="9800507at2"/>
<dbReference type="GO" id="GO:0005737">
    <property type="term" value="C:cytoplasm"/>
    <property type="evidence" value="ECO:0007669"/>
    <property type="project" value="UniProtKB-SubCell"/>
</dbReference>
<dbReference type="GO" id="GO:0004045">
    <property type="term" value="F:peptidyl-tRNA hydrolase activity"/>
    <property type="evidence" value="ECO:0007669"/>
    <property type="project" value="UniProtKB-UniRule"/>
</dbReference>
<dbReference type="GO" id="GO:0000049">
    <property type="term" value="F:tRNA binding"/>
    <property type="evidence" value="ECO:0007669"/>
    <property type="project" value="UniProtKB-UniRule"/>
</dbReference>
<dbReference type="GO" id="GO:0006515">
    <property type="term" value="P:protein quality control for misfolded or incompletely synthesized proteins"/>
    <property type="evidence" value="ECO:0007669"/>
    <property type="project" value="UniProtKB-UniRule"/>
</dbReference>
<dbReference type="GO" id="GO:0072344">
    <property type="term" value="P:rescue of stalled ribosome"/>
    <property type="evidence" value="ECO:0007669"/>
    <property type="project" value="UniProtKB-UniRule"/>
</dbReference>
<dbReference type="CDD" id="cd00462">
    <property type="entry name" value="PTH"/>
    <property type="match status" value="1"/>
</dbReference>
<dbReference type="FunFam" id="3.40.50.1470:FF:000001">
    <property type="entry name" value="Peptidyl-tRNA hydrolase"/>
    <property type="match status" value="1"/>
</dbReference>
<dbReference type="Gene3D" id="3.40.50.1470">
    <property type="entry name" value="Peptidyl-tRNA hydrolase"/>
    <property type="match status" value="1"/>
</dbReference>
<dbReference type="HAMAP" id="MF_00083">
    <property type="entry name" value="Pept_tRNA_hydro_bact"/>
    <property type="match status" value="1"/>
</dbReference>
<dbReference type="InterPro" id="IPR001328">
    <property type="entry name" value="Pept_tRNA_hydro"/>
</dbReference>
<dbReference type="InterPro" id="IPR018171">
    <property type="entry name" value="Pept_tRNA_hydro_CS"/>
</dbReference>
<dbReference type="InterPro" id="IPR036416">
    <property type="entry name" value="Pept_tRNA_hydro_sf"/>
</dbReference>
<dbReference type="NCBIfam" id="TIGR00447">
    <property type="entry name" value="pth"/>
    <property type="match status" value="1"/>
</dbReference>
<dbReference type="PANTHER" id="PTHR17224">
    <property type="entry name" value="PEPTIDYL-TRNA HYDROLASE"/>
    <property type="match status" value="1"/>
</dbReference>
<dbReference type="PANTHER" id="PTHR17224:SF1">
    <property type="entry name" value="PEPTIDYL-TRNA HYDROLASE"/>
    <property type="match status" value="1"/>
</dbReference>
<dbReference type="Pfam" id="PF01195">
    <property type="entry name" value="Pept_tRNA_hydro"/>
    <property type="match status" value="1"/>
</dbReference>
<dbReference type="SUPFAM" id="SSF53178">
    <property type="entry name" value="Peptidyl-tRNA hydrolase-like"/>
    <property type="match status" value="1"/>
</dbReference>
<dbReference type="PROSITE" id="PS01195">
    <property type="entry name" value="PEPT_TRNA_HYDROL_1"/>
    <property type="match status" value="1"/>
</dbReference>
<dbReference type="PROSITE" id="PS01196">
    <property type="entry name" value="PEPT_TRNA_HYDROL_2"/>
    <property type="match status" value="1"/>
</dbReference>
<sequence length="188" mass="20403">MAAKLIVGLGNPGPKYSWTRHNAGFMVLDRLASISGIQVTRKAFSGLSGDGNWAAERVYLLKPQTFMNLSGRSVAEALRFYKLSLSDLIVIHDDLDIPFGKVKLKEGGGHGGHNGLRSLAQELGSSAYARIRVGIGRPVHGDVVNFVLANFAKEEMDSLLEVLDTSVDALEMMIKEGMPKAMSIFNAR</sequence>
<organism>
    <name type="scientific">Geobacter sp. (strain M21)</name>
    <dbReference type="NCBI Taxonomy" id="443144"/>
    <lineage>
        <taxon>Bacteria</taxon>
        <taxon>Pseudomonadati</taxon>
        <taxon>Thermodesulfobacteriota</taxon>
        <taxon>Desulfuromonadia</taxon>
        <taxon>Geobacterales</taxon>
        <taxon>Geobacteraceae</taxon>
        <taxon>Geobacter</taxon>
    </lineage>
</organism>
<name>PTH_GEOSM</name>
<reference key="1">
    <citation type="submission" date="2009-07" db="EMBL/GenBank/DDBJ databases">
        <title>Complete sequence of Geobacter sp. M21.</title>
        <authorList>
            <consortium name="US DOE Joint Genome Institute"/>
            <person name="Lucas S."/>
            <person name="Copeland A."/>
            <person name="Lapidus A."/>
            <person name="Glavina del Rio T."/>
            <person name="Dalin E."/>
            <person name="Tice H."/>
            <person name="Bruce D."/>
            <person name="Goodwin L."/>
            <person name="Pitluck S."/>
            <person name="Saunders E."/>
            <person name="Brettin T."/>
            <person name="Detter J.C."/>
            <person name="Han C."/>
            <person name="Larimer F."/>
            <person name="Land M."/>
            <person name="Hauser L."/>
            <person name="Kyrpides N."/>
            <person name="Ovchinnikova G."/>
            <person name="Lovley D."/>
        </authorList>
    </citation>
    <scope>NUCLEOTIDE SEQUENCE [LARGE SCALE GENOMIC DNA]</scope>
    <source>
        <strain>M21</strain>
    </source>
</reference>
<evidence type="ECO:0000255" key="1">
    <source>
        <dbReference type="HAMAP-Rule" id="MF_00083"/>
    </source>
</evidence>
<gene>
    <name evidence="1" type="primary">pth</name>
    <name type="ordered locus">GM21_1474</name>
</gene>
<feature type="chain" id="PRO_1000202586" description="Peptidyl-tRNA hydrolase">
    <location>
        <begin position="1"/>
        <end position="188"/>
    </location>
</feature>
<feature type="active site" description="Proton acceptor" evidence="1">
    <location>
        <position position="21"/>
    </location>
</feature>
<feature type="binding site" evidence="1">
    <location>
        <position position="16"/>
    </location>
    <ligand>
        <name>tRNA</name>
        <dbReference type="ChEBI" id="CHEBI:17843"/>
    </ligand>
</feature>
<feature type="binding site" evidence="1">
    <location>
        <position position="66"/>
    </location>
    <ligand>
        <name>tRNA</name>
        <dbReference type="ChEBI" id="CHEBI:17843"/>
    </ligand>
</feature>
<feature type="binding site" evidence="1">
    <location>
        <position position="68"/>
    </location>
    <ligand>
        <name>tRNA</name>
        <dbReference type="ChEBI" id="CHEBI:17843"/>
    </ligand>
</feature>
<feature type="binding site" evidence="1">
    <location>
        <position position="114"/>
    </location>
    <ligand>
        <name>tRNA</name>
        <dbReference type="ChEBI" id="CHEBI:17843"/>
    </ligand>
</feature>
<feature type="site" description="Discriminates between blocked and unblocked aminoacyl-tRNA" evidence="1">
    <location>
        <position position="11"/>
    </location>
</feature>
<feature type="site" description="Stabilizes the basic form of H active site to accept a proton" evidence="1">
    <location>
        <position position="93"/>
    </location>
</feature>